<sequence>MKILVDENIPYAHKIFSRLGDVQIIHGRKITAQIVSSYDALIVRSVTNVNQSLLEGSKVRFVGSTTSGIDHIDDHWLEKSGIKFSYAAGCNAIAVVEYVFTALLLLSQRYGFHLRDKTVGIIGVGNIGRLLYQRLNAFGVPTLLCDPPQAEISTIGEWQLLEKLVTEADVLTLHTPLTYHGRHATWHLINEDLLSALPSTKRILINTCRGAVVDNVALLHALKKGKLLSVILDVWEKEPNLSLSLLNNVDIGTAHIAGYSLEGKVRGAIKIFNDYSKFLGAIQSLNVSAFLPAPMIEYVRWHGVINEEELRKLAYLIYDLQFDDILLRRNIHKPHGFDQLRTNYCERREWSSLSVGTDNNISTNMLNQLGFKSILI</sequence>
<feature type="chain" id="PRO_0000297435" description="Erythronate-4-phosphate dehydrogenase">
    <location>
        <begin position="1"/>
        <end position="376"/>
    </location>
</feature>
<feature type="active site" evidence="1">
    <location>
        <position position="209"/>
    </location>
</feature>
<feature type="active site" evidence="1">
    <location>
        <position position="238"/>
    </location>
</feature>
<feature type="active site" description="Proton donor" evidence="1">
    <location>
        <position position="255"/>
    </location>
</feature>
<feature type="binding site" evidence="1">
    <location>
        <position position="45"/>
    </location>
    <ligand>
        <name>substrate</name>
    </ligand>
</feature>
<feature type="binding site" evidence="1">
    <location>
        <position position="66"/>
    </location>
    <ligand>
        <name>substrate</name>
    </ligand>
</feature>
<feature type="binding site" evidence="1">
    <location>
        <position position="146"/>
    </location>
    <ligand>
        <name>NAD(+)</name>
        <dbReference type="ChEBI" id="CHEBI:57540"/>
    </ligand>
</feature>
<feature type="binding site" evidence="1">
    <location>
        <position position="175"/>
    </location>
    <ligand>
        <name>NAD(+)</name>
        <dbReference type="ChEBI" id="CHEBI:57540"/>
    </ligand>
</feature>
<feature type="binding site" evidence="1">
    <location>
        <position position="233"/>
    </location>
    <ligand>
        <name>NAD(+)</name>
        <dbReference type="ChEBI" id="CHEBI:57540"/>
    </ligand>
</feature>
<feature type="binding site" evidence="1">
    <location>
        <position position="258"/>
    </location>
    <ligand>
        <name>NAD(+)</name>
        <dbReference type="ChEBI" id="CHEBI:57540"/>
    </ligand>
</feature>
<feature type="binding site" evidence="1">
    <location>
        <position position="259"/>
    </location>
    <ligand>
        <name>substrate</name>
    </ligand>
</feature>
<protein>
    <recommendedName>
        <fullName evidence="1">Erythronate-4-phosphate dehydrogenase</fullName>
        <ecNumber evidence="1">1.1.1.290</ecNumber>
    </recommendedName>
</protein>
<dbReference type="EC" id="1.1.1.290" evidence="1"/>
<dbReference type="EMBL" id="CP000238">
    <property type="protein sequence ID" value="ABF14137.1"/>
    <property type="molecule type" value="Genomic_DNA"/>
</dbReference>
<dbReference type="RefSeq" id="WP_011520540.1">
    <property type="nucleotide sequence ID" value="NC_007984.1"/>
</dbReference>
<dbReference type="SMR" id="Q1LTA7"/>
<dbReference type="STRING" id="374463.BCI_0363"/>
<dbReference type="KEGG" id="bci:BCI_0363"/>
<dbReference type="HOGENOM" id="CLU_019796_4_0_6"/>
<dbReference type="OrthoDB" id="9770208at2"/>
<dbReference type="UniPathway" id="UPA00244">
    <property type="reaction ID" value="UER00310"/>
</dbReference>
<dbReference type="Proteomes" id="UP000002427">
    <property type="component" value="Chromosome"/>
</dbReference>
<dbReference type="GO" id="GO:0005829">
    <property type="term" value="C:cytosol"/>
    <property type="evidence" value="ECO:0007669"/>
    <property type="project" value="TreeGrafter"/>
</dbReference>
<dbReference type="GO" id="GO:0033711">
    <property type="term" value="F:4-phosphoerythronate dehydrogenase activity"/>
    <property type="evidence" value="ECO:0007669"/>
    <property type="project" value="UniProtKB-EC"/>
</dbReference>
<dbReference type="GO" id="GO:0030267">
    <property type="term" value="F:glyoxylate reductase (NADPH) activity"/>
    <property type="evidence" value="ECO:0007669"/>
    <property type="project" value="TreeGrafter"/>
</dbReference>
<dbReference type="GO" id="GO:0016618">
    <property type="term" value="F:hydroxypyruvate reductase [NAD(P)H] activity"/>
    <property type="evidence" value="ECO:0007669"/>
    <property type="project" value="TreeGrafter"/>
</dbReference>
<dbReference type="GO" id="GO:0051287">
    <property type="term" value="F:NAD binding"/>
    <property type="evidence" value="ECO:0007669"/>
    <property type="project" value="InterPro"/>
</dbReference>
<dbReference type="GO" id="GO:0046983">
    <property type="term" value="F:protein dimerization activity"/>
    <property type="evidence" value="ECO:0007669"/>
    <property type="project" value="InterPro"/>
</dbReference>
<dbReference type="GO" id="GO:0008615">
    <property type="term" value="P:pyridoxine biosynthetic process"/>
    <property type="evidence" value="ECO:0007669"/>
    <property type="project" value="UniProtKB-UniRule"/>
</dbReference>
<dbReference type="CDD" id="cd12158">
    <property type="entry name" value="ErythrP_dh"/>
    <property type="match status" value="1"/>
</dbReference>
<dbReference type="Gene3D" id="3.30.1370.170">
    <property type="match status" value="1"/>
</dbReference>
<dbReference type="Gene3D" id="3.40.50.720">
    <property type="entry name" value="NAD(P)-binding Rossmann-like Domain"/>
    <property type="match status" value="2"/>
</dbReference>
<dbReference type="HAMAP" id="MF_01825">
    <property type="entry name" value="PdxB"/>
    <property type="match status" value="1"/>
</dbReference>
<dbReference type="InterPro" id="IPR050223">
    <property type="entry name" value="D-isomer_2-hydroxyacid_DH"/>
</dbReference>
<dbReference type="InterPro" id="IPR006139">
    <property type="entry name" value="D-isomer_2_OHA_DH_cat_dom"/>
</dbReference>
<dbReference type="InterPro" id="IPR029752">
    <property type="entry name" value="D-isomer_DH_CS1"/>
</dbReference>
<dbReference type="InterPro" id="IPR006140">
    <property type="entry name" value="D-isomer_DH_NAD-bd"/>
</dbReference>
<dbReference type="InterPro" id="IPR020921">
    <property type="entry name" value="Erythronate-4-P_DHase"/>
</dbReference>
<dbReference type="InterPro" id="IPR024531">
    <property type="entry name" value="Erythronate-4-P_DHase_dimer"/>
</dbReference>
<dbReference type="InterPro" id="IPR036291">
    <property type="entry name" value="NAD(P)-bd_dom_sf"/>
</dbReference>
<dbReference type="InterPro" id="IPR038251">
    <property type="entry name" value="PdxB_dimer_sf"/>
</dbReference>
<dbReference type="PANTHER" id="PTHR10996:SF178">
    <property type="entry name" value="2-HYDROXYACID DEHYDROGENASE YGL185C-RELATED"/>
    <property type="match status" value="1"/>
</dbReference>
<dbReference type="PANTHER" id="PTHR10996">
    <property type="entry name" value="2-HYDROXYACID DEHYDROGENASE-RELATED"/>
    <property type="match status" value="1"/>
</dbReference>
<dbReference type="Pfam" id="PF00389">
    <property type="entry name" value="2-Hacid_dh"/>
    <property type="match status" value="1"/>
</dbReference>
<dbReference type="Pfam" id="PF02826">
    <property type="entry name" value="2-Hacid_dh_C"/>
    <property type="match status" value="1"/>
</dbReference>
<dbReference type="Pfam" id="PF11890">
    <property type="entry name" value="DUF3410"/>
    <property type="match status" value="1"/>
</dbReference>
<dbReference type="SUPFAM" id="SSF52283">
    <property type="entry name" value="Formate/glycerate dehydrogenase catalytic domain-like"/>
    <property type="match status" value="1"/>
</dbReference>
<dbReference type="SUPFAM" id="SSF51735">
    <property type="entry name" value="NAD(P)-binding Rossmann-fold domains"/>
    <property type="match status" value="1"/>
</dbReference>
<dbReference type="PROSITE" id="PS00065">
    <property type="entry name" value="D_2_HYDROXYACID_DH_1"/>
    <property type="match status" value="1"/>
</dbReference>
<keyword id="KW-0963">Cytoplasm</keyword>
<keyword id="KW-0520">NAD</keyword>
<keyword id="KW-0560">Oxidoreductase</keyword>
<keyword id="KW-0664">Pyridoxine biosynthesis</keyword>
<keyword id="KW-1185">Reference proteome</keyword>
<proteinExistence type="inferred from homology"/>
<organism>
    <name type="scientific">Baumannia cicadellinicola subsp. Homalodisca coagulata</name>
    <dbReference type="NCBI Taxonomy" id="374463"/>
    <lineage>
        <taxon>Bacteria</taxon>
        <taxon>Pseudomonadati</taxon>
        <taxon>Pseudomonadota</taxon>
        <taxon>Gammaproteobacteria</taxon>
        <taxon>Candidatus Palibaumannia</taxon>
    </lineage>
</organism>
<accession>Q1LTA7</accession>
<name>PDXB_BAUCH</name>
<gene>
    <name evidence="1" type="primary">pdxB</name>
    <name type="ordered locus">BCI_0363</name>
</gene>
<evidence type="ECO:0000255" key="1">
    <source>
        <dbReference type="HAMAP-Rule" id="MF_01825"/>
    </source>
</evidence>
<comment type="function">
    <text evidence="1">Catalyzes the oxidation of erythronate-4-phosphate to 3-hydroxy-2-oxo-4-phosphonooxybutanoate.</text>
</comment>
<comment type="catalytic activity">
    <reaction evidence="1">
        <text>4-phospho-D-erythronate + NAD(+) = (R)-3-hydroxy-2-oxo-4-phosphooxybutanoate + NADH + H(+)</text>
        <dbReference type="Rhea" id="RHEA:18829"/>
        <dbReference type="ChEBI" id="CHEBI:15378"/>
        <dbReference type="ChEBI" id="CHEBI:57540"/>
        <dbReference type="ChEBI" id="CHEBI:57945"/>
        <dbReference type="ChEBI" id="CHEBI:58538"/>
        <dbReference type="ChEBI" id="CHEBI:58766"/>
        <dbReference type="EC" id="1.1.1.290"/>
    </reaction>
</comment>
<comment type="pathway">
    <text evidence="1">Cofactor biosynthesis; pyridoxine 5'-phosphate biosynthesis; pyridoxine 5'-phosphate from D-erythrose 4-phosphate: step 2/5.</text>
</comment>
<comment type="subunit">
    <text evidence="1">Homodimer.</text>
</comment>
<comment type="subcellular location">
    <subcellularLocation>
        <location evidence="1">Cytoplasm</location>
    </subcellularLocation>
</comment>
<comment type="similarity">
    <text evidence="1">Belongs to the D-isomer specific 2-hydroxyacid dehydrogenase family. PdxB subfamily.</text>
</comment>
<reference key="1">
    <citation type="journal article" date="2006" name="PLoS Biol.">
        <title>Metabolic complementarity and genomics of the dual bacterial symbiosis of sharpshooters.</title>
        <authorList>
            <person name="Wu D."/>
            <person name="Daugherty S.C."/>
            <person name="Van Aken S.E."/>
            <person name="Pai G.H."/>
            <person name="Watkins K.L."/>
            <person name="Khouri H."/>
            <person name="Tallon L.J."/>
            <person name="Zaborsky J.M."/>
            <person name="Dunbar H.E."/>
            <person name="Tran P.L."/>
            <person name="Moran N.A."/>
            <person name="Eisen J.A."/>
        </authorList>
    </citation>
    <scope>NUCLEOTIDE SEQUENCE [LARGE SCALE GENOMIC DNA]</scope>
</reference>